<reference key="1">
    <citation type="submission" date="2006-02" db="EMBL/GenBank/DDBJ databases">
        <title>Complete sequence of chromosome of Rhodoferax ferrireducens DSM 15236.</title>
        <authorList>
            <person name="Copeland A."/>
            <person name="Lucas S."/>
            <person name="Lapidus A."/>
            <person name="Barry K."/>
            <person name="Detter J.C."/>
            <person name="Glavina del Rio T."/>
            <person name="Hammon N."/>
            <person name="Israni S."/>
            <person name="Pitluck S."/>
            <person name="Brettin T."/>
            <person name="Bruce D."/>
            <person name="Han C."/>
            <person name="Tapia R."/>
            <person name="Gilna P."/>
            <person name="Kiss H."/>
            <person name="Schmutz J."/>
            <person name="Larimer F."/>
            <person name="Land M."/>
            <person name="Kyrpides N."/>
            <person name="Ivanova N."/>
            <person name="Richardson P."/>
        </authorList>
    </citation>
    <scope>NUCLEOTIDE SEQUENCE [LARGE SCALE GENOMIC DNA]</scope>
    <source>
        <strain>ATCC BAA-621 / DSM 15236 / T118</strain>
    </source>
</reference>
<keyword id="KW-0030">Aminoacyl-tRNA synthetase</keyword>
<keyword id="KW-0067">ATP-binding</keyword>
<keyword id="KW-0963">Cytoplasm</keyword>
<keyword id="KW-0436">Ligase</keyword>
<keyword id="KW-0547">Nucleotide-binding</keyword>
<keyword id="KW-0648">Protein biosynthesis</keyword>
<keyword id="KW-1185">Reference proteome</keyword>
<accession>Q21YZ5</accession>
<sequence>MKASQFFISTLKEAPADAEVVSHKLMTRAGMIKKLGAGIYSLMPMGLRVVRKVEQIVREEMNRAGAVELVMPVVQPAELWQETGRFESNGPELLRIKDRHGRDFVVQPTSEEVVTDIARQEIKSYKQLPKNLYQIQTKFRDERRPRFGLMRGREFIMKDAYSFDRDQASAKASYQVMAAAYRRIFDRFGLTYRAVAADSGAIGGDLSEEFQVIAATGEDAIVYCPGSDYAANMEKAEALAPSGPRAAPKQAFAKTATPGKSTCADVAELLQVPLQHTVKSLVLATDTLNKEGAIVKTQIWLLLLRGDHDMNEVKVGKLPGLAAFRFATVPEIEAHFGCQPGYLGPMGLRQPVQLVVDREVALMSDWICGANEPDFHITGVNWGRDLPEPALVADLRNVVAGDASPDGQGVLAIERGIEIGHVFYLGTKYSQAMNATFLDVNGKPQFMEMGCYGIGITRLPAAAIEQNHDERGIIWPDALAPFTVVLCPISPERFPDVKAASDKLYAELLAAGVDVILDDRGERPGAMFADWELIGVPHRVTIGDRGLKAGEVEYQHRRDSAATTVGVTAIFSLLQAKLKA</sequence>
<name>SYP_ALBFT</name>
<evidence type="ECO:0000255" key="1">
    <source>
        <dbReference type="HAMAP-Rule" id="MF_01569"/>
    </source>
</evidence>
<evidence type="ECO:0000305" key="2"/>
<organism>
    <name type="scientific">Albidiferax ferrireducens (strain ATCC BAA-621 / DSM 15236 / T118)</name>
    <name type="common">Rhodoferax ferrireducens</name>
    <dbReference type="NCBI Taxonomy" id="338969"/>
    <lineage>
        <taxon>Bacteria</taxon>
        <taxon>Pseudomonadati</taxon>
        <taxon>Pseudomonadota</taxon>
        <taxon>Betaproteobacteria</taxon>
        <taxon>Burkholderiales</taxon>
        <taxon>Comamonadaceae</taxon>
        <taxon>Rhodoferax</taxon>
    </lineage>
</organism>
<proteinExistence type="inferred from homology"/>
<feature type="chain" id="PRO_0000248756" description="Proline--tRNA ligase">
    <location>
        <begin position="1"/>
        <end position="580"/>
    </location>
</feature>
<comment type="function">
    <text evidence="1">Catalyzes the attachment of proline to tRNA(Pro) in a two-step reaction: proline is first activated by ATP to form Pro-AMP and then transferred to the acceptor end of tRNA(Pro). As ProRS can inadvertently accommodate and process non-cognate amino acids such as alanine and cysteine, to avoid such errors it has two additional distinct editing activities against alanine. One activity is designated as 'pretransfer' editing and involves the tRNA(Pro)-independent hydrolysis of activated Ala-AMP. The other activity is designated 'posttransfer' editing and involves deacylation of mischarged Ala-tRNA(Pro). The misacylated Cys-tRNA(Pro) is not edited by ProRS.</text>
</comment>
<comment type="catalytic activity">
    <reaction evidence="1">
        <text>tRNA(Pro) + L-proline + ATP = L-prolyl-tRNA(Pro) + AMP + diphosphate</text>
        <dbReference type="Rhea" id="RHEA:14305"/>
        <dbReference type="Rhea" id="RHEA-COMP:9700"/>
        <dbReference type="Rhea" id="RHEA-COMP:9702"/>
        <dbReference type="ChEBI" id="CHEBI:30616"/>
        <dbReference type="ChEBI" id="CHEBI:33019"/>
        <dbReference type="ChEBI" id="CHEBI:60039"/>
        <dbReference type="ChEBI" id="CHEBI:78442"/>
        <dbReference type="ChEBI" id="CHEBI:78532"/>
        <dbReference type="ChEBI" id="CHEBI:456215"/>
        <dbReference type="EC" id="6.1.1.15"/>
    </reaction>
</comment>
<comment type="subunit">
    <text evidence="1">Homodimer.</text>
</comment>
<comment type="subcellular location">
    <subcellularLocation>
        <location evidence="1">Cytoplasm</location>
    </subcellularLocation>
</comment>
<comment type="domain">
    <text evidence="1">Consists of three domains: the N-terminal catalytic domain, the editing domain and the C-terminal anticodon-binding domain.</text>
</comment>
<comment type="similarity">
    <text evidence="1">Belongs to the class-II aminoacyl-tRNA synthetase family. ProS type 1 subfamily.</text>
</comment>
<comment type="sequence caution" evidence="2">
    <conflict type="erroneous initiation">
        <sequence resource="EMBL-CDS" id="ABD69008"/>
    </conflict>
</comment>
<gene>
    <name evidence="1" type="primary">proS</name>
    <name type="ordered locus">Rfer_1274</name>
</gene>
<protein>
    <recommendedName>
        <fullName evidence="1">Proline--tRNA ligase</fullName>
        <ecNumber evidence="1">6.1.1.15</ecNumber>
    </recommendedName>
    <alternativeName>
        <fullName evidence="1">Prolyl-tRNA synthetase</fullName>
        <shortName evidence="1">ProRS</shortName>
    </alternativeName>
</protein>
<dbReference type="EC" id="6.1.1.15" evidence="1"/>
<dbReference type="EMBL" id="CP000267">
    <property type="protein sequence ID" value="ABD69008.1"/>
    <property type="status" value="ALT_INIT"/>
    <property type="molecule type" value="Genomic_DNA"/>
</dbReference>
<dbReference type="RefSeq" id="WP_011463576.1">
    <property type="nucleotide sequence ID" value="NC_007908.1"/>
</dbReference>
<dbReference type="SMR" id="Q21YZ5"/>
<dbReference type="STRING" id="338969.Rfer_1274"/>
<dbReference type="KEGG" id="rfr:Rfer_1274"/>
<dbReference type="eggNOG" id="COG0442">
    <property type="taxonomic scope" value="Bacteria"/>
</dbReference>
<dbReference type="HOGENOM" id="CLU_016739_0_0_4"/>
<dbReference type="OrthoDB" id="9809052at2"/>
<dbReference type="Proteomes" id="UP000008332">
    <property type="component" value="Chromosome"/>
</dbReference>
<dbReference type="GO" id="GO:0005829">
    <property type="term" value="C:cytosol"/>
    <property type="evidence" value="ECO:0007669"/>
    <property type="project" value="TreeGrafter"/>
</dbReference>
<dbReference type="GO" id="GO:0002161">
    <property type="term" value="F:aminoacyl-tRNA deacylase activity"/>
    <property type="evidence" value="ECO:0007669"/>
    <property type="project" value="InterPro"/>
</dbReference>
<dbReference type="GO" id="GO:0005524">
    <property type="term" value="F:ATP binding"/>
    <property type="evidence" value="ECO:0007669"/>
    <property type="project" value="UniProtKB-UniRule"/>
</dbReference>
<dbReference type="GO" id="GO:0004827">
    <property type="term" value="F:proline-tRNA ligase activity"/>
    <property type="evidence" value="ECO:0007669"/>
    <property type="project" value="UniProtKB-UniRule"/>
</dbReference>
<dbReference type="GO" id="GO:0006433">
    <property type="term" value="P:prolyl-tRNA aminoacylation"/>
    <property type="evidence" value="ECO:0007669"/>
    <property type="project" value="UniProtKB-UniRule"/>
</dbReference>
<dbReference type="CDD" id="cd04334">
    <property type="entry name" value="ProRS-INS"/>
    <property type="match status" value="1"/>
</dbReference>
<dbReference type="CDD" id="cd00861">
    <property type="entry name" value="ProRS_anticodon_short"/>
    <property type="match status" value="1"/>
</dbReference>
<dbReference type="CDD" id="cd00779">
    <property type="entry name" value="ProRS_core_prok"/>
    <property type="match status" value="1"/>
</dbReference>
<dbReference type="FunFam" id="3.30.930.10:FF:000042">
    <property type="entry name" value="probable proline--tRNA ligase, mitochondrial"/>
    <property type="match status" value="1"/>
</dbReference>
<dbReference type="Gene3D" id="3.40.50.800">
    <property type="entry name" value="Anticodon-binding domain"/>
    <property type="match status" value="1"/>
</dbReference>
<dbReference type="Gene3D" id="3.30.930.10">
    <property type="entry name" value="Bira Bifunctional Protein, Domain 2"/>
    <property type="match status" value="2"/>
</dbReference>
<dbReference type="Gene3D" id="3.90.960.10">
    <property type="entry name" value="YbaK/aminoacyl-tRNA synthetase-associated domain"/>
    <property type="match status" value="1"/>
</dbReference>
<dbReference type="HAMAP" id="MF_01569">
    <property type="entry name" value="Pro_tRNA_synth_type1"/>
    <property type="match status" value="1"/>
</dbReference>
<dbReference type="InterPro" id="IPR002314">
    <property type="entry name" value="aa-tRNA-synt_IIb"/>
</dbReference>
<dbReference type="InterPro" id="IPR006195">
    <property type="entry name" value="aa-tRNA-synth_II"/>
</dbReference>
<dbReference type="InterPro" id="IPR045864">
    <property type="entry name" value="aa-tRNA-synth_II/BPL/LPL"/>
</dbReference>
<dbReference type="InterPro" id="IPR004154">
    <property type="entry name" value="Anticodon-bd"/>
</dbReference>
<dbReference type="InterPro" id="IPR036621">
    <property type="entry name" value="Anticodon-bd_dom_sf"/>
</dbReference>
<dbReference type="InterPro" id="IPR002316">
    <property type="entry name" value="Pro-tRNA-ligase_IIa"/>
</dbReference>
<dbReference type="InterPro" id="IPR004500">
    <property type="entry name" value="Pro-tRNA-synth_IIa_bac-type"/>
</dbReference>
<dbReference type="InterPro" id="IPR023717">
    <property type="entry name" value="Pro-tRNA-Synthase_IIa_type1"/>
</dbReference>
<dbReference type="InterPro" id="IPR050062">
    <property type="entry name" value="Pro-tRNA_synthetase"/>
</dbReference>
<dbReference type="InterPro" id="IPR044140">
    <property type="entry name" value="ProRS_anticodon_short"/>
</dbReference>
<dbReference type="InterPro" id="IPR033730">
    <property type="entry name" value="ProRS_core_prok"/>
</dbReference>
<dbReference type="InterPro" id="IPR036754">
    <property type="entry name" value="YbaK/aa-tRNA-synt-asso_dom_sf"/>
</dbReference>
<dbReference type="InterPro" id="IPR007214">
    <property type="entry name" value="YbaK/aa-tRNA-synth-assoc-dom"/>
</dbReference>
<dbReference type="NCBIfam" id="NF006625">
    <property type="entry name" value="PRK09194.1"/>
    <property type="match status" value="1"/>
</dbReference>
<dbReference type="NCBIfam" id="TIGR00409">
    <property type="entry name" value="proS_fam_II"/>
    <property type="match status" value="1"/>
</dbReference>
<dbReference type="PANTHER" id="PTHR42753">
    <property type="entry name" value="MITOCHONDRIAL RIBOSOME PROTEIN L39/PROLYL-TRNA LIGASE FAMILY MEMBER"/>
    <property type="match status" value="1"/>
</dbReference>
<dbReference type="PANTHER" id="PTHR42753:SF2">
    <property type="entry name" value="PROLINE--TRNA LIGASE"/>
    <property type="match status" value="1"/>
</dbReference>
<dbReference type="Pfam" id="PF03129">
    <property type="entry name" value="HGTP_anticodon"/>
    <property type="match status" value="1"/>
</dbReference>
<dbReference type="Pfam" id="PF00587">
    <property type="entry name" value="tRNA-synt_2b"/>
    <property type="match status" value="1"/>
</dbReference>
<dbReference type="Pfam" id="PF04073">
    <property type="entry name" value="tRNA_edit"/>
    <property type="match status" value="1"/>
</dbReference>
<dbReference type="PIRSF" id="PIRSF001535">
    <property type="entry name" value="ProRS_1"/>
    <property type="match status" value="1"/>
</dbReference>
<dbReference type="PRINTS" id="PR01046">
    <property type="entry name" value="TRNASYNTHPRO"/>
</dbReference>
<dbReference type="SUPFAM" id="SSF52954">
    <property type="entry name" value="Class II aaRS ABD-related"/>
    <property type="match status" value="1"/>
</dbReference>
<dbReference type="SUPFAM" id="SSF55681">
    <property type="entry name" value="Class II aaRS and biotin synthetases"/>
    <property type="match status" value="1"/>
</dbReference>
<dbReference type="SUPFAM" id="SSF55826">
    <property type="entry name" value="YbaK/ProRS associated domain"/>
    <property type="match status" value="1"/>
</dbReference>
<dbReference type="PROSITE" id="PS50862">
    <property type="entry name" value="AA_TRNA_LIGASE_II"/>
    <property type="match status" value="1"/>
</dbReference>